<dbReference type="EMBL" id="AE002160">
    <property type="protein sequence ID" value="AAF39503.1"/>
    <property type="molecule type" value="Genomic_DNA"/>
</dbReference>
<dbReference type="PIR" id="H81675">
    <property type="entry name" value="H81675"/>
</dbReference>
<dbReference type="RefSeq" id="WP_010231220.1">
    <property type="nucleotide sequence ID" value="NZ_CP027217.1"/>
</dbReference>
<dbReference type="SMR" id="Q9PJZ0"/>
<dbReference type="GeneID" id="1246047"/>
<dbReference type="KEGG" id="cmu:TC_0686"/>
<dbReference type="eggNOG" id="COG1327">
    <property type="taxonomic scope" value="Bacteria"/>
</dbReference>
<dbReference type="HOGENOM" id="CLU_108412_0_0_0"/>
<dbReference type="OrthoDB" id="9807461at2"/>
<dbReference type="Proteomes" id="UP000000800">
    <property type="component" value="Chromosome"/>
</dbReference>
<dbReference type="GO" id="GO:0005524">
    <property type="term" value="F:ATP binding"/>
    <property type="evidence" value="ECO:0007669"/>
    <property type="project" value="UniProtKB-KW"/>
</dbReference>
<dbReference type="GO" id="GO:0003677">
    <property type="term" value="F:DNA binding"/>
    <property type="evidence" value="ECO:0007669"/>
    <property type="project" value="UniProtKB-KW"/>
</dbReference>
<dbReference type="GO" id="GO:0008270">
    <property type="term" value="F:zinc ion binding"/>
    <property type="evidence" value="ECO:0007669"/>
    <property type="project" value="UniProtKB-UniRule"/>
</dbReference>
<dbReference type="GO" id="GO:0045892">
    <property type="term" value="P:negative regulation of DNA-templated transcription"/>
    <property type="evidence" value="ECO:0007669"/>
    <property type="project" value="UniProtKB-UniRule"/>
</dbReference>
<dbReference type="HAMAP" id="MF_00440">
    <property type="entry name" value="NrdR"/>
    <property type="match status" value="1"/>
</dbReference>
<dbReference type="InterPro" id="IPR005144">
    <property type="entry name" value="ATP-cone_dom"/>
</dbReference>
<dbReference type="InterPro" id="IPR055173">
    <property type="entry name" value="NrdR-like_N"/>
</dbReference>
<dbReference type="InterPro" id="IPR003796">
    <property type="entry name" value="RNR_NrdR-like"/>
</dbReference>
<dbReference type="NCBIfam" id="TIGR00244">
    <property type="entry name" value="transcriptional regulator NrdR"/>
    <property type="match status" value="1"/>
</dbReference>
<dbReference type="PANTHER" id="PTHR30455">
    <property type="entry name" value="TRANSCRIPTIONAL REPRESSOR NRDR"/>
    <property type="match status" value="1"/>
</dbReference>
<dbReference type="PANTHER" id="PTHR30455:SF2">
    <property type="entry name" value="TRANSCRIPTIONAL REPRESSOR NRDR"/>
    <property type="match status" value="1"/>
</dbReference>
<dbReference type="Pfam" id="PF03477">
    <property type="entry name" value="ATP-cone"/>
    <property type="match status" value="1"/>
</dbReference>
<dbReference type="Pfam" id="PF22811">
    <property type="entry name" value="Zn_ribbon_NrdR"/>
    <property type="match status" value="1"/>
</dbReference>
<dbReference type="PROSITE" id="PS51161">
    <property type="entry name" value="ATP_CONE"/>
    <property type="match status" value="1"/>
</dbReference>
<proteinExistence type="inferred from homology"/>
<comment type="function">
    <text evidence="1">Negatively regulates transcription of bacterial ribonucleotide reductase nrd genes and operons by binding to NrdR-boxes.</text>
</comment>
<comment type="cofactor">
    <cofactor evidence="1">
        <name>Zn(2+)</name>
        <dbReference type="ChEBI" id="CHEBI:29105"/>
    </cofactor>
    <text evidence="1">Binds 1 zinc ion.</text>
</comment>
<comment type="similarity">
    <text evidence="1">Belongs to the NrdR family.</text>
</comment>
<name>NRDR_CHLMU</name>
<accession>Q9PJZ0</accession>
<organism>
    <name type="scientific">Chlamydia muridarum (strain MoPn / Nigg)</name>
    <dbReference type="NCBI Taxonomy" id="243161"/>
    <lineage>
        <taxon>Bacteria</taxon>
        <taxon>Pseudomonadati</taxon>
        <taxon>Chlamydiota</taxon>
        <taxon>Chlamydiia</taxon>
        <taxon>Chlamydiales</taxon>
        <taxon>Chlamydiaceae</taxon>
        <taxon>Chlamydia/Chlamydophila group</taxon>
        <taxon>Chlamydia</taxon>
    </lineage>
</organism>
<evidence type="ECO:0000255" key="1">
    <source>
        <dbReference type="HAMAP-Rule" id="MF_00440"/>
    </source>
</evidence>
<protein>
    <recommendedName>
        <fullName evidence="1">Transcriptional repressor NrdR</fullName>
    </recommendedName>
</protein>
<keyword id="KW-0067">ATP-binding</keyword>
<keyword id="KW-0238">DNA-binding</keyword>
<keyword id="KW-0479">Metal-binding</keyword>
<keyword id="KW-0547">Nucleotide-binding</keyword>
<keyword id="KW-0678">Repressor</keyword>
<keyword id="KW-0804">Transcription</keyword>
<keyword id="KW-0805">Transcription regulation</keyword>
<keyword id="KW-0862">Zinc</keyword>
<keyword id="KW-0863">Zinc-finger</keyword>
<feature type="chain" id="PRO_0000182280" description="Transcriptional repressor NrdR">
    <location>
        <begin position="1"/>
        <end position="152"/>
    </location>
</feature>
<feature type="domain" description="ATP-cone" evidence="1">
    <location>
        <begin position="48"/>
        <end position="138"/>
    </location>
</feature>
<feature type="zinc finger region" evidence="1">
    <location>
        <begin position="3"/>
        <end position="34"/>
    </location>
</feature>
<sequence>MLCPFCNHGELKVIDSRNSPEANAIKRRRECLRCSQRFTTFETVELTIQVLKRDGRYENFQEAKLINGLKAASSHTRIGQEQVQAIASNIKQDLLGKQNREISTKEIGELVMKYLKKADMIAYIRFACVYRRFRDVGELMEVLLSATPDGEK</sequence>
<reference key="1">
    <citation type="journal article" date="2000" name="Nucleic Acids Res.">
        <title>Genome sequences of Chlamydia trachomatis MoPn and Chlamydia pneumoniae AR39.</title>
        <authorList>
            <person name="Read T.D."/>
            <person name="Brunham R.C."/>
            <person name="Shen C."/>
            <person name="Gill S.R."/>
            <person name="Heidelberg J.F."/>
            <person name="White O."/>
            <person name="Hickey E.K."/>
            <person name="Peterson J.D."/>
            <person name="Utterback T.R."/>
            <person name="Berry K.J."/>
            <person name="Bass S."/>
            <person name="Linher K.D."/>
            <person name="Weidman J.F."/>
            <person name="Khouri H.M."/>
            <person name="Craven B."/>
            <person name="Bowman C."/>
            <person name="Dodson R.J."/>
            <person name="Gwinn M.L."/>
            <person name="Nelson W.C."/>
            <person name="DeBoy R.T."/>
            <person name="Kolonay J.F."/>
            <person name="McClarty G."/>
            <person name="Salzberg S.L."/>
            <person name="Eisen J.A."/>
            <person name="Fraser C.M."/>
        </authorList>
    </citation>
    <scope>NUCLEOTIDE SEQUENCE [LARGE SCALE GENOMIC DNA]</scope>
    <source>
        <strain>MoPn / Nigg</strain>
    </source>
</reference>
<gene>
    <name evidence="1" type="primary">nrdR</name>
    <name type="ordered locus">TC_0686</name>
</gene>